<evidence type="ECO:0000255" key="1">
    <source>
        <dbReference type="HAMAP-Rule" id="MF_00184"/>
    </source>
</evidence>
<evidence type="ECO:0000255" key="2">
    <source>
        <dbReference type="PROSITE-ProRule" id="PRU01228"/>
    </source>
</evidence>
<name>SYT_RICB8</name>
<sequence length="633" mass="72428">MINISFPDGSVKQFEKNITAFEIAVVISTSLAKAAMIAEINGDLKDLSTQIDNDCRLRILTAKDPECLEVIRHDAAHLTAEAVKELFPETQVTIGPAIENGYYYDFARDKPFTTDDLAVIEAKMHELAKKNEKVTRELWDREKAVEFFKSIGEHYKAEIIASIPSNEPISLYRQGNFIDLCRGPHAPSTGFVKHFKLMKVAGAYWRGDSRNEVLQRIYGTAWATKEQLESYLFMLEEAEKRDHRKLGKELDLFHFQEEAQGMVFWHDKGWSVYNTIEQYIRRKIRKNGYIEVKTPVLVDKSLWELSGHWEKFRDDMFALETDDKTLALKPMNCPCHVQIFKQGIKSYRDLPLRMSEFGLCHRNEASGALHGLMRVRSLVQDDAHIFCAEEQITDETVSFCKLLTEVYKDFGFTDIKVKFSDRPEVRAGSSETWDKAENALKEAVEKAGYSYTLNPGEGAFYGPKLEFVLTDAIGRQWQCGTLQMDFVLPERLDASYVAASGEKKRPVMLHRAILGSLERFIGILIEEYAGRFPLWLAPVQVAIATITSDLNDYALEVQKALIESGVRVDINISPDKINYKIREFSNQKVPMIAVIGKQEKENKQVTIRRLGTTEQEVLSIEQLIEYIREENSK</sequence>
<dbReference type="EC" id="6.1.1.3" evidence="1"/>
<dbReference type="EMBL" id="CP000849">
    <property type="protein sequence ID" value="ABV78978.1"/>
    <property type="molecule type" value="Genomic_DNA"/>
</dbReference>
<dbReference type="RefSeq" id="WP_012151767.1">
    <property type="nucleotide sequence ID" value="NC_009883.1"/>
</dbReference>
<dbReference type="SMR" id="A8GVV1"/>
<dbReference type="KEGG" id="rbo:A1I_03065"/>
<dbReference type="HOGENOM" id="CLU_008554_0_1_5"/>
<dbReference type="GO" id="GO:0005737">
    <property type="term" value="C:cytoplasm"/>
    <property type="evidence" value="ECO:0007669"/>
    <property type="project" value="UniProtKB-SubCell"/>
</dbReference>
<dbReference type="GO" id="GO:0005524">
    <property type="term" value="F:ATP binding"/>
    <property type="evidence" value="ECO:0007669"/>
    <property type="project" value="UniProtKB-UniRule"/>
</dbReference>
<dbReference type="GO" id="GO:0046872">
    <property type="term" value="F:metal ion binding"/>
    <property type="evidence" value="ECO:0007669"/>
    <property type="project" value="UniProtKB-KW"/>
</dbReference>
<dbReference type="GO" id="GO:0004829">
    <property type="term" value="F:threonine-tRNA ligase activity"/>
    <property type="evidence" value="ECO:0007669"/>
    <property type="project" value="UniProtKB-UniRule"/>
</dbReference>
<dbReference type="GO" id="GO:0000049">
    <property type="term" value="F:tRNA binding"/>
    <property type="evidence" value="ECO:0007669"/>
    <property type="project" value="UniProtKB-KW"/>
</dbReference>
<dbReference type="GO" id="GO:0006435">
    <property type="term" value="P:threonyl-tRNA aminoacylation"/>
    <property type="evidence" value="ECO:0007669"/>
    <property type="project" value="UniProtKB-UniRule"/>
</dbReference>
<dbReference type="CDD" id="cd01667">
    <property type="entry name" value="TGS_ThrRS"/>
    <property type="match status" value="1"/>
</dbReference>
<dbReference type="CDD" id="cd00860">
    <property type="entry name" value="ThrRS_anticodon"/>
    <property type="match status" value="1"/>
</dbReference>
<dbReference type="CDD" id="cd00771">
    <property type="entry name" value="ThrRS_core"/>
    <property type="match status" value="1"/>
</dbReference>
<dbReference type="FunFam" id="3.10.20.30:FF:000005">
    <property type="entry name" value="Threonine--tRNA ligase"/>
    <property type="match status" value="1"/>
</dbReference>
<dbReference type="FunFam" id="3.30.54.20:FF:000002">
    <property type="entry name" value="Threonine--tRNA ligase"/>
    <property type="match status" value="1"/>
</dbReference>
<dbReference type="FunFam" id="3.30.930.10:FF:000002">
    <property type="entry name" value="Threonine--tRNA ligase"/>
    <property type="match status" value="1"/>
</dbReference>
<dbReference type="FunFam" id="3.40.50.800:FF:000001">
    <property type="entry name" value="Threonine--tRNA ligase"/>
    <property type="match status" value="1"/>
</dbReference>
<dbReference type="FunFam" id="3.30.980.10:FF:000005">
    <property type="entry name" value="Threonyl-tRNA synthetase, mitochondrial"/>
    <property type="match status" value="1"/>
</dbReference>
<dbReference type="Gene3D" id="3.10.20.30">
    <property type="match status" value="1"/>
</dbReference>
<dbReference type="Gene3D" id="3.30.54.20">
    <property type="match status" value="1"/>
</dbReference>
<dbReference type="Gene3D" id="3.40.50.800">
    <property type="entry name" value="Anticodon-binding domain"/>
    <property type="match status" value="1"/>
</dbReference>
<dbReference type="Gene3D" id="3.30.930.10">
    <property type="entry name" value="Bira Bifunctional Protein, Domain 2"/>
    <property type="match status" value="1"/>
</dbReference>
<dbReference type="Gene3D" id="3.30.980.10">
    <property type="entry name" value="Threonyl-trna Synthetase, Chain A, domain 2"/>
    <property type="match status" value="1"/>
</dbReference>
<dbReference type="HAMAP" id="MF_00184">
    <property type="entry name" value="Thr_tRNA_synth"/>
    <property type="match status" value="1"/>
</dbReference>
<dbReference type="InterPro" id="IPR002314">
    <property type="entry name" value="aa-tRNA-synt_IIb"/>
</dbReference>
<dbReference type="InterPro" id="IPR006195">
    <property type="entry name" value="aa-tRNA-synth_II"/>
</dbReference>
<dbReference type="InterPro" id="IPR045864">
    <property type="entry name" value="aa-tRNA-synth_II/BPL/LPL"/>
</dbReference>
<dbReference type="InterPro" id="IPR004154">
    <property type="entry name" value="Anticodon-bd"/>
</dbReference>
<dbReference type="InterPro" id="IPR036621">
    <property type="entry name" value="Anticodon-bd_dom_sf"/>
</dbReference>
<dbReference type="InterPro" id="IPR012675">
    <property type="entry name" value="Beta-grasp_dom_sf"/>
</dbReference>
<dbReference type="InterPro" id="IPR004095">
    <property type="entry name" value="TGS"/>
</dbReference>
<dbReference type="InterPro" id="IPR012676">
    <property type="entry name" value="TGS-like"/>
</dbReference>
<dbReference type="InterPro" id="IPR002320">
    <property type="entry name" value="Thr-tRNA-ligase_IIa"/>
</dbReference>
<dbReference type="InterPro" id="IPR018163">
    <property type="entry name" value="Thr/Ala-tRNA-synth_IIc_edit"/>
</dbReference>
<dbReference type="InterPro" id="IPR047246">
    <property type="entry name" value="ThrRS_anticodon"/>
</dbReference>
<dbReference type="InterPro" id="IPR033728">
    <property type="entry name" value="ThrRS_core"/>
</dbReference>
<dbReference type="InterPro" id="IPR012947">
    <property type="entry name" value="tRNA_SAD"/>
</dbReference>
<dbReference type="NCBIfam" id="TIGR00418">
    <property type="entry name" value="thrS"/>
    <property type="match status" value="1"/>
</dbReference>
<dbReference type="PANTHER" id="PTHR11451:SF44">
    <property type="entry name" value="THREONINE--TRNA LIGASE, CHLOROPLASTIC_MITOCHONDRIAL 2"/>
    <property type="match status" value="1"/>
</dbReference>
<dbReference type="PANTHER" id="PTHR11451">
    <property type="entry name" value="THREONINE-TRNA LIGASE"/>
    <property type="match status" value="1"/>
</dbReference>
<dbReference type="Pfam" id="PF03129">
    <property type="entry name" value="HGTP_anticodon"/>
    <property type="match status" value="1"/>
</dbReference>
<dbReference type="Pfam" id="PF02824">
    <property type="entry name" value="TGS"/>
    <property type="match status" value="1"/>
</dbReference>
<dbReference type="Pfam" id="PF00587">
    <property type="entry name" value="tRNA-synt_2b"/>
    <property type="match status" value="1"/>
</dbReference>
<dbReference type="Pfam" id="PF07973">
    <property type="entry name" value="tRNA_SAD"/>
    <property type="match status" value="1"/>
</dbReference>
<dbReference type="PRINTS" id="PR01047">
    <property type="entry name" value="TRNASYNTHTHR"/>
</dbReference>
<dbReference type="SMART" id="SM00863">
    <property type="entry name" value="tRNA_SAD"/>
    <property type="match status" value="1"/>
</dbReference>
<dbReference type="SUPFAM" id="SSF52954">
    <property type="entry name" value="Class II aaRS ABD-related"/>
    <property type="match status" value="1"/>
</dbReference>
<dbReference type="SUPFAM" id="SSF55681">
    <property type="entry name" value="Class II aaRS and biotin synthetases"/>
    <property type="match status" value="1"/>
</dbReference>
<dbReference type="SUPFAM" id="SSF81271">
    <property type="entry name" value="TGS-like"/>
    <property type="match status" value="1"/>
</dbReference>
<dbReference type="SUPFAM" id="SSF55186">
    <property type="entry name" value="ThrRS/AlaRS common domain"/>
    <property type="match status" value="1"/>
</dbReference>
<dbReference type="PROSITE" id="PS50862">
    <property type="entry name" value="AA_TRNA_LIGASE_II"/>
    <property type="match status" value="1"/>
</dbReference>
<dbReference type="PROSITE" id="PS51880">
    <property type="entry name" value="TGS"/>
    <property type="match status" value="1"/>
</dbReference>
<organism>
    <name type="scientific">Rickettsia bellii (strain OSU 85-389)</name>
    <dbReference type="NCBI Taxonomy" id="391896"/>
    <lineage>
        <taxon>Bacteria</taxon>
        <taxon>Pseudomonadati</taxon>
        <taxon>Pseudomonadota</taxon>
        <taxon>Alphaproteobacteria</taxon>
        <taxon>Rickettsiales</taxon>
        <taxon>Rickettsiaceae</taxon>
        <taxon>Rickettsieae</taxon>
        <taxon>Rickettsia</taxon>
        <taxon>belli group</taxon>
    </lineage>
</organism>
<accession>A8GVV1</accession>
<protein>
    <recommendedName>
        <fullName evidence="1">Threonine--tRNA ligase</fullName>
        <ecNumber evidence="1">6.1.1.3</ecNumber>
    </recommendedName>
    <alternativeName>
        <fullName evidence="1">Threonyl-tRNA synthetase</fullName>
        <shortName evidence="1">ThrRS</shortName>
    </alternativeName>
</protein>
<proteinExistence type="inferred from homology"/>
<gene>
    <name evidence="1" type="primary">thrS</name>
    <name type="ordered locus">A1I_03065</name>
</gene>
<feature type="chain" id="PRO_1000020494" description="Threonine--tRNA ligase">
    <location>
        <begin position="1"/>
        <end position="633"/>
    </location>
</feature>
<feature type="domain" description="TGS" evidence="2">
    <location>
        <begin position="1"/>
        <end position="61"/>
    </location>
</feature>
<feature type="region of interest" description="Catalytic" evidence="1">
    <location>
        <begin position="242"/>
        <end position="533"/>
    </location>
</feature>
<feature type="binding site" evidence="1">
    <location>
        <position position="333"/>
    </location>
    <ligand>
        <name>Zn(2+)</name>
        <dbReference type="ChEBI" id="CHEBI:29105"/>
    </ligand>
</feature>
<feature type="binding site" evidence="1">
    <location>
        <position position="384"/>
    </location>
    <ligand>
        <name>Zn(2+)</name>
        <dbReference type="ChEBI" id="CHEBI:29105"/>
    </ligand>
</feature>
<feature type="binding site" evidence="1">
    <location>
        <position position="510"/>
    </location>
    <ligand>
        <name>Zn(2+)</name>
        <dbReference type="ChEBI" id="CHEBI:29105"/>
    </ligand>
</feature>
<reference key="1">
    <citation type="submission" date="2007-09" db="EMBL/GenBank/DDBJ databases">
        <title>Complete genome sequencing of Rickettsia bellii.</title>
        <authorList>
            <person name="Madan A."/>
            <person name="Lee H."/>
            <person name="Madan A."/>
            <person name="Yoon J.-G."/>
            <person name="Ryu G.-Y."/>
            <person name="Dasch G."/>
            <person name="Ereemeva M."/>
        </authorList>
    </citation>
    <scope>NUCLEOTIDE SEQUENCE [LARGE SCALE GENOMIC DNA]</scope>
    <source>
        <strain>OSU 85-389</strain>
    </source>
</reference>
<comment type="function">
    <text evidence="1">Catalyzes the attachment of threonine to tRNA(Thr) in a two-step reaction: L-threonine is first activated by ATP to form Thr-AMP and then transferred to the acceptor end of tRNA(Thr). Also edits incorrectly charged L-seryl-tRNA(Thr).</text>
</comment>
<comment type="catalytic activity">
    <reaction evidence="1">
        <text>tRNA(Thr) + L-threonine + ATP = L-threonyl-tRNA(Thr) + AMP + diphosphate + H(+)</text>
        <dbReference type="Rhea" id="RHEA:24624"/>
        <dbReference type="Rhea" id="RHEA-COMP:9670"/>
        <dbReference type="Rhea" id="RHEA-COMP:9704"/>
        <dbReference type="ChEBI" id="CHEBI:15378"/>
        <dbReference type="ChEBI" id="CHEBI:30616"/>
        <dbReference type="ChEBI" id="CHEBI:33019"/>
        <dbReference type="ChEBI" id="CHEBI:57926"/>
        <dbReference type="ChEBI" id="CHEBI:78442"/>
        <dbReference type="ChEBI" id="CHEBI:78534"/>
        <dbReference type="ChEBI" id="CHEBI:456215"/>
        <dbReference type="EC" id="6.1.1.3"/>
    </reaction>
</comment>
<comment type="cofactor">
    <cofactor evidence="1">
        <name>Zn(2+)</name>
        <dbReference type="ChEBI" id="CHEBI:29105"/>
    </cofactor>
    <text evidence="1">Binds 1 zinc ion per subunit.</text>
</comment>
<comment type="subunit">
    <text evidence="1">Homodimer.</text>
</comment>
<comment type="subcellular location">
    <subcellularLocation>
        <location evidence="1">Cytoplasm</location>
    </subcellularLocation>
</comment>
<comment type="similarity">
    <text evidence="1">Belongs to the class-II aminoacyl-tRNA synthetase family.</text>
</comment>
<keyword id="KW-0030">Aminoacyl-tRNA synthetase</keyword>
<keyword id="KW-0067">ATP-binding</keyword>
<keyword id="KW-0963">Cytoplasm</keyword>
<keyword id="KW-0436">Ligase</keyword>
<keyword id="KW-0479">Metal-binding</keyword>
<keyword id="KW-0547">Nucleotide-binding</keyword>
<keyword id="KW-0648">Protein biosynthesis</keyword>
<keyword id="KW-0694">RNA-binding</keyword>
<keyword id="KW-0820">tRNA-binding</keyword>
<keyword id="KW-0862">Zinc</keyword>